<proteinExistence type="evidence at protein level"/>
<organism>
    <name type="scientific">Achromobacter lyticus</name>
    <dbReference type="NCBI Taxonomy" id="224"/>
    <lineage>
        <taxon>Bacteria</taxon>
        <taxon>Pseudomonadati</taxon>
        <taxon>Pseudomonadota</taxon>
        <taxon>Betaproteobacteria</taxon>
        <taxon>Burkholderiales</taxon>
        <taxon>Alcaligenaceae</taxon>
        <taxon>Achromobacter</taxon>
    </lineage>
</organism>
<dbReference type="EC" id="3.4.21.-"/>
<dbReference type="SMR" id="P81719"/>
<dbReference type="GO" id="GO:0005576">
    <property type="term" value="C:extracellular region"/>
    <property type="evidence" value="ECO:0007669"/>
    <property type="project" value="UniProtKB-SubCell"/>
</dbReference>
<dbReference type="GO" id="GO:0004252">
    <property type="term" value="F:serine-type endopeptidase activity"/>
    <property type="evidence" value="ECO:0007669"/>
    <property type="project" value="InterPro"/>
</dbReference>
<dbReference type="GO" id="GO:0006508">
    <property type="term" value="P:proteolysis"/>
    <property type="evidence" value="ECO:0007669"/>
    <property type="project" value="UniProtKB-KW"/>
</dbReference>
<dbReference type="Gene3D" id="3.40.50.200">
    <property type="entry name" value="Peptidase S8/S53 domain"/>
    <property type="match status" value="1"/>
</dbReference>
<dbReference type="InterPro" id="IPR036852">
    <property type="entry name" value="Peptidase_S8/S53_dom_sf"/>
</dbReference>
<dbReference type="InterPro" id="IPR023827">
    <property type="entry name" value="Peptidase_S8_Asp-AS"/>
</dbReference>
<dbReference type="SUPFAM" id="SSF52743">
    <property type="entry name" value="Subtilisin-like"/>
    <property type="match status" value="1"/>
</dbReference>
<dbReference type="PROSITE" id="PS51892">
    <property type="entry name" value="SUBTILASE"/>
    <property type="match status" value="1"/>
</dbReference>
<dbReference type="PROSITE" id="PS00136">
    <property type="entry name" value="SUBTILASE_ASP"/>
    <property type="match status" value="1"/>
</dbReference>
<sequence>LTPNDPLYSQQWGLSGTYGIRANTAWDNGYQGQGKIIAVVDTGITDHPDLLANRTSPLGYDFI</sequence>
<evidence type="ECO:0000255" key="1">
    <source>
        <dbReference type="PROSITE-ProRule" id="PRU01240"/>
    </source>
</evidence>
<evidence type="ECO:0000305" key="2"/>
<comment type="subunit">
    <text>Heterodimer of a large and a small chain.</text>
</comment>
<comment type="subcellular location">
    <subcellularLocation>
        <location>Secreted</location>
    </subcellularLocation>
</comment>
<comment type="similarity">
    <text evidence="2">Belongs to the peptidase S8 family.</text>
</comment>
<feature type="chain" id="PRO_0000076413" description="Protease 2 small chain">
    <location>
        <begin position="1"/>
        <end position="63" status="greater than"/>
    </location>
</feature>
<feature type="domain" description="Peptidase S8" evidence="1">
    <location>
        <begin position="11"/>
        <end position="63" status="greater than"/>
    </location>
</feature>
<feature type="non-terminal residue">
    <location>
        <position position="63"/>
    </location>
</feature>
<accession>P81719</accession>
<protein>
    <recommendedName>
        <fullName>Protease 2 small chain</fullName>
        <ecNumber>3.4.21.-</ecNumber>
    </recommendedName>
    <alternativeName>
        <fullName>APII</fullName>
    </alternativeName>
    <alternativeName>
        <fullName>Protease II small chain</fullName>
    </alternativeName>
</protein>
<name>PIIS_ACHLY</name>
<reference key="1">
    <citation type="submission" date="1999-03" db="UniProtKB">
        <authorList>
            <person name="Li S.L."/>
        </authorList>
    </citation>
    <scope>PROTEIN SEQUENCE</scope>
    <source>
        <strain>M497-1</strain>
    </source>
</reference>
<keyword id="KW-0903">Direct protein sequencing</keyword>
<keyword id="KW-0378">Hydrolase</keyword>
<keyword id="KW-0645">Protease</keyword>
<keyword id="KW-0964">Secreted</keyword>
<keyword id="KW-0720">Serine protease</keyword>